<evidence type="ECO:0000255" key="1">
    <source>
        <dbReference type="HAMAP-Rule" id="MF_01853"/>
    </source>
</evidence>
<feature type="chain" id="PRO_0000361802" description="Protein pelota homolog">
    <location>
        <begin position="1"/>
        <end position="353"/>
    </location>
</feature>
<reference key="1">
    <citation type="journal article" date="2002" name="Proc. Natl. Acad. Sci. U.S.A.">
        <title>The complete genome of hyperthermophile Methanopyrus kandleri AV19 and monophyly of archaeal methanogens.</title>
        <authorList>
            <person name="Slesarev A.I."/>
            <person name="Mezhevaya K.V."/>
            <person name="Makarova K.S."/>
            <person name="Polushin N.N."/>
            <person name="Shcherbinina O.V."/>
            <person name="Shakhova V.V."/>
            <person name="Belova G.I."/>
            <person name="Aravind L."/>
            <person name="Natale D.A."/>
            <person name="Rogozin I.B."/>
            <person name="Tatusov R.L."/>
            <person name="Wolf Y.I."/>
            <person name="Stetter K.O."/>
            <person name="Malykh A.G."/>
            <person name="Koonin E.V."/>
            <person name="Kozyavkin S.A."/>
        </authorList>
    </citation>
    <scope>NUCLEOTIDE SEQUENCE [LARGE SCALE GENOMIC DNA]</scope>
    <source>
        <strain>AV19 / DSM 6324 / JCM 9639 / NBRC 100938</strain>
    </source>
</reference>
<organism>
    <name type="scientific">Methanopyrus kandleri (strain AV19 / DSM 6324 / JCM 9639 / NBRC 100938)</name>
    <dbReference type="NCBI Taxonomy" id="190192"/>
    <lineage>
        <taxon>Archaea</taxon>
        <taxon>Methanobacteriati</taxon>
        <taxon>Methanobacteriota</taxon>
        <taxon>Methanomada group</taxon>
        <taxon>Methanopyri</taxon>
        <taxon>Methanopyrales</taxon>
        <taxon>Methanopyraceae</taxon>
        <taxon>Methanopyrus</taxon>
    </lineage>
</organism>
<gene>
    <name evidence="1" type="primary">pelA</name>
    <name type="ordered locus">MK0038</name>
</gene>
<accession>Q8TZ98</accession>
<name>PELO_METKA</name>
<protein>
    <recommendedName>
        <fullName evidence="1">Protein pelota homolog</fullName>
        <ecNumber evidence="1">3.1.-.-</ecNumber>
    </recommendedName>
</protein>
<keyword id="KW-0963">Cytoplasm</keyword>
<keyword id="KW-0255">Endonuclease</keyword>
<keyword id="KW-0378">Hydrolase</keyword>
<keyword id="KW-0479">Metal-binding</keyword>
<keyword id="KW-0540">Nuclease</keyword>
<keyword id="KW-1185">Reference proteome</keyword>
<comment type="function">
    <text evidence="1">May function in recognizing stalled ribosomes, interact with stem-loop structures in stalled mRNA molecules, and effect endonucleolytic cleavage of the mRNA. May play a role in the release non-functional ribosomes and degradation of damaged mRNAs. Has endoribonuclease activity.</text>
</comment>
<comment type="cofactor">
    <cofactor evidence="1">
        <name>a divalent metal cation</name>
        <dbReference type="ChEBI" id="CHEBI:60240"/>
    </cofactor>
</comment>
<comment type="subunit">
    <text evidence="1">Monomer.</text>
</comment>
<comment type="subcellular location">
    <subcellularLocation>
        <location evidence="1">Cytoplasm</location>
    </subcellularLocation>
</comment>
<comment type="domain">
    <text evidence="1">The N-terminal domain has the RNA-binding Sm fold. It harbors the endoribonuclease activity.</text>
</comment>
<comment type="similarity">
    <text evidence="1">Belongs to the eukaryotic release factor 1 family. Pelota subfamily.</text>
</comment>
<dbReference type="EC" id="3.1.-.-" evidence="1"/>
<dbReference type="EMBL" id="AE009439">
    <property type="protein sequence ID" value="AAM01255.1"/>
    <property type="molecule type" value="Genomic_DNA"/>
</dbReference>
<dbReference type="RefSeq" id="WP_011018410.1">
    <property type="nucleotide sequence ID" value="NC_003551.1"/>
</dbReference>
<dbReference type="SMR" id="Q8TZ98"/>
<dbReference type="FunCoup" id="Q8TZ98">
    <property type="interactions" value="99"/>
</dbReference>
<dbReference type="STRING" id="190192.MK0038"/>
<dbReference type="PaxDb" id="190192-MK0038"/>
<dbReference type="EnsemblBacteria" id="AAM01255">
    <property type="protein sequence ID" value="AAM01255"/>
    <property type="gene ID" value="MK0038"/>
</dbReference>
<dbReference type="GeneID" id="1477341"/>
<dbReference type="KEGG" id="mka:MK0038"/>
<dbReference type="PATRIC" id="fig|190192.8.peg.38"/>
<dbReference type="HOGENOM" id="CLU_023334_0_0_2"/>
<dbReference type="InParanoid" id="Q8TZ98"/>
<dbReference type="OrthoDB" id="31300at2157"/>
<dbReference type="Proteomes" id="UP000001826">
    <property type="component" value="Chromosome"/>
</dbReference>
<dbReference type="GO" id="GO:0005737">
    <property type="term" value="C:cytoplasm"/>
    <property type="evidence" value="ECO:0007669"/>
    <property type="project" value="UniProtKB-SubCell"/>
</dbReference>
<dbReference type="GO" id="GO:0004519">
    <property type="term" value="F:endonuclease activity"/>
    <property type="evidence" value="ECO:0007669"/>
    <property type="project" value="UniProtKB-UniRule"/>
</dbReference>
<dbReference type="GO" id="GO:0046872">
    <property type="term" value="F:metal ion binding"/>
    <property type="evidence" value="ECO:0007669"/>
    <property type="project" value="UniProtKB-UniRule"/>
</dbReference>
<dbReference type="GO" id="GO:0070651">
    <property type="term" value="P:nonfunctional rRNA decay"/>
    <property type="evidence" value="ECO:0007669"/>
    <property type="project" value="TreeGrafter"/>
</dbReference>
<dbReference type="GO" id="GO:0070966">
    <property type="term" value="P:nuclear-transcribed mRNA catabolic process, no-go decay"/>
    <property type="evidence" value="ECO:0007669"/>
    <property type="project" value="InterPro"/>
</dbReference>
<dbReference type="GO" id="GO:0070481">
    <property type="term" value="P:nuclear-transcribed mRNA catabolic process, non-stop decay"/>
    <property type="evidence" value="ECO:0007669"/>
    <property type="project" value="InterPro"/>
</dbReference>
<dbReference type="GO" id="GO:0032790">
    <property type="term" value="P:ribosome disassembly"/>
    <property type="evidence" value="ECO:0007669"/>
    <property type="project" value="TreeGrafter"/>
</dbReference>
<dbReference type="GO" id="GO:0071025">
    <property type="term" value="P:RNA surveillance"/>
    <property type="evidence" value="ECO:0007669"/>
    <property type="project" value="InterPro"/>
</dbReference>
<dbReference type="Gene3D" id="3.30.1330.30">
    <property type="match status" value="1"/>
</dbReference>
<dbReference type="Gene3D" id="3.30.420.60">
    <property type="entry name" value="eRF1 domain 2"/>
    <property type="match status" value="1"/>
</dbReference>
<dbReference type="Gene3D" id="2.30.30.870">
    <property type="entry name" value="Pelota, domain A"/>
    <property type="match status" value="1"/>
</dbReference>
<dbReference type="HAMAP" id="MF_01853">
    <property type="entry name" value="PelO"/>
    <property type="match status" value="1"/>
</dbReference>
<dbReference type="InterPro" id="IPR042226">
    <property type="entry name" value="eFR1_2_sf"/>
</dbReference>
<dbReference type="InterPro" id="IPR005140">
    <property type="entry name" value="eRF1_1_Pelota"/>
</dbReference>
<dbReference type="InterPro" id="IPR005141">
    <property type="entry name" value="eRF1_2"/>
</dbReference>
<dbReference type="InterPro" id="IPR005142">
    <property type="entry name" value="eRF1_3"/>
</dbReference>
<dbReference type="InterPro" id="IPR038069">
    <property type="entry name" value="Pelota/DOM34_N"/>
</dbReference>
<dbReference type="InterPro" id="IPR023521">
    <property type="entry name" value="Pelota_arc"/>
</dbReference>
<dbReference type="InterPro" id="IPR029064">
    <property type="entry name" value="Ribosomal_eL30-like_sf"/>
</dbReference>
<dbReference type="InterPro" id="IPR004405">
    <property type="entry name" value="Transl-rel_pelota"/>
</dbReference>
<dbReference type="NCBIfam" id="TIGR00111">
    <property type="entry name" value="pelota"/>
    <property type="match status" value="1"/>
</dbReference>
<dbReference type="PANTHER" id="PTHR10853">
    <property type="entry name" value="PELOTA"/>
    <property type="match status" value="1"/>
</dbReference>
<dbReference type="PANTHER" id="PTHR10853:SF0">
    <property type="entry name" value="PROTEIN PELOTA HOMOLOG"/>
    <property type="match status" value="1"/>
</dbReference>
<dbReference type="Pfam" id="PF03463">
    <property type="entry name" value="eRF1_1"/>
    <property type="match status" value="1"/>
</dbReference>
<dbReference type="Pfam" id="PF03464">
    <property type="entry name" value="eRF1_2"/>
    <property type="match status" value="1"/>
</dbReference>
<dbReference type="Pfam" id="PF03465">
    <property type="entry name" value="eRF1_3"/>
    <property type="match status" value="1"/>
</dbReference>
<dbReference type="SMART" id="SM01194">
    <property type="entry name" value="eRF1_1"/>
    <property type="match status" value="1"/>
</dbReference>
<dbReference type="SUPFAM" id="SSF159065">
    <property type="entry name" value="Dom34/Pelota N-terminal domain-like"/>
    <property type="match status" value="1"/>
</dbReference>
<dbReference type="SUPFAM" id="SSF55315">
    <property type="entry name" value="L30e-like"/>
    <property type="match status" value="1"/>
</dbReference>
<dbReference type="SUPFAM" id="SSF53137">
    <property type="entry name" value="Translational machinery components"/>
    <property type="match status" value="1"/>
</dbReference>
<sequence>MKVVEKDLDKGYIEVLPETLDDLWHLYHVVRKGDLVFALERRRVKDERAETIRRDKGERKPVYLGVRVEDVEFDKYANRLRIKGVIEHGPESGSHHTVNVTTGKRIKIVKDEWERKDLERIEEAEMSRPPVMLVAVDTGEGTIGIVRDYGLDVVARVRHNVPGKRGGDRRAEMRKFFHRLADEIERIAEEEGVEHIVVGGPGFVKSDFAEFLREERDIPAHVEDTGSAGEAGLIEMIRRGAVERAVEESRVAEEVKHLEEVFKRIGKGDDKVAYGVRECLKAAEFGAIDVLLVADEKFREAMVEGEEDVLNAVKYAERTGAEVLIVSTEHEWGERLRELGGIAALLRFSIPTG</sequence>
<proteinExistence type="inferred from homology"/>